<gene>
    <name evidence="1" type="primary">rimP</name>
    <name type="ordered locus">SO_1202</name>
</gene>
<protein>
    <recommendedName>
        <fullName evidence="1">Ribosome maturation factor RimP</fullName>
    </recommendedName>
</protein>
<proteinExistence type="inferred from homology"/>
<organism>
    <name type="scientific">Shewanella oneidensis (strain ATCC 700550 / JCM 31522 / CIP 106686 / LMG 19005 / NCIMB 14063 / MR-1)</name>
    <dbReference type="NCBI Taxonomy" id="211586"/>
    <lineage>
        <taxon>Bacteria</taxon>
        <taxon>Pseudomonadati</taxon>
        <taxon>Pseudomonadota</taxon>
        <taxon>Gammaproteobacteria</taxon>
        <taxon>Alteromonadales</taxon>
        <taxon>Shewanellaceae</taxon>
        <taxon>Shewanella</taxon>
    </lineage>
</organism>
<accession>Q8EHL7</accession>
<evidence type="ECO:0000255" key="1">
    <source>
        <dbReference type="HAMAP-Rule" id="MF_01077"/>
    </source>
</evidence>
<dbReference type="EMBL" id="AE014299">
    <property type="protein sequence ID" value="AAN54272.1"/>
    <property type="molecule type" value="Genomic_DNA"/>
</dbReference>
<dbReference type="RefSeq" id="NP_716827.1">
    <property type="nucleotide sequence ID" value="NC_004347.2"/>
</dbReference>
<dbReference type="RefSeq" id="WP_011071432.1">
    <property type="nucleotide sequence ID" value="NZ_CP053946.1"/>
</dbReference>
<dbReference type="SMR" id="Q8EHL7"/>
<dbReference type="STRING" id="211586.SO_1202"/>
<dbReference type="PaxDb" id="211586-SO_1202"/>
<dbReference type="KEGG" id="son:SO_1202"/>
<dbReference type="PATRIC" id="fig|211586.12.peg.1154"/>
<dbReference type="eggNOG" id="COG0779">
    <property type="taxonomic scope" value="Bacteria"/>
</dbReference>
<dbReference type="HOGENOM" id="CLU_070525_1_1_6"/>
<dbReference type="OrthoDB" id="9805006at2"/>
<dbReference type="PhylomeDB" id="Q8EHL7"/>
<dbReference type="BioCyc" id="SONE211586:G1GMP-1114-MONOMER"/>
<dbReference type="Proteomes" id="UP000008186">
    <property type="component" value="Chromosome"/>
</dbReference>
<dbReference type="GO" id="GO:0005829">
    <property type="term" value="C:cytosol"/>
    <property type="evidence" value="ECO:0000318"/>
    <property type="project" value="GO_Central"/>
</dbReference>
<dbReference type="GO" id="GO:0000028">
    <property type="term" value="P:ribosomal small subunit assembly"/>
    <property type="evidence" value="ECO:0000318"/>
    <property type="project" value="GO_Central"/>
</dbReference>
<dbReference type="GO" id="GO:0006412">
    <property type="term" value="P:translation"/>
    <property type="evidence" value="ECO:0000318"/>
    <property type="project" value="GO_Central"/>
</dbReference>
<dbReference type="CDD" id="cd01734">
    <property type="entry name" value="YlxS_C"/>
    <property type="match status" value="1"/>
</dbReference>
<dbReference type="FunFam" id="2.30.30.180:FF:000001">
    <property type="entry name" value="Ribosome maturation factor RimP"/>
    <property type="match status" value="1"/>
</dbReference>
<dbReference type="FunFam" id="3.30.300.70:FF:000001">
    <property type="entry name" value="Ribosome maturation factor RimP"/>
    <property type="match status" value="1"/>
</dbReference>
<dbReference type="Gene3D" id="2.30.30.180">
    <property type="entry name" value="Ribosome maturation factor RimP, C-terminal domain"/>
    <property type="match status" value="1"/>
</dbReference>
<dbReference type="Gene3D" id="3.30.300.70">
    <property type="entry name" value="RimP-like superfamily, N-terminal"/>
    <property type="match status" value="1"/>
</dbReference>
<dbReference type="HAMAP" id="MF_01077">
    <property type="entry name" value="RimP"/>
    <property type="match status" value="1"/>
</dbReference>
<dbReference type="InterPro" id="IPR003728">
    <property type="entry name" value="Ribosome_maturation_RimP"/>
</dbReference>
<dbReference type="InterPro" id="IPR028998">
    <property type="entry name" value="RimP_C"/>
</dbReference>
<dbReference type="InterPro" id="IPR036847">
    <property type="entry name" value="RimP_C_sf"/>
</dbReference>
<dbReference type="InterPro" id="IPR028989">
    <property type="entry name" value="RimP_N"/>
</dbReference>
<dbReference type="InterPro" id="IPR035956">
    <property type="entry name" value="RimP_N_sf"/>
</dbReference>
<dbReference type="NCBIfam" id="NF000927">
    <property type="entry name" value="PRK00092.1-1"/>
    <property type="match status" value="1"/>
</dbReference>
<dbReference type="PANTHER" id="PTHR33867">
    <property type="entry name" value="RIBOSOME MATURATION FACTOR RIMP"/>
    <property type="match status" value="1"/>
</dbReference>
<dbReference type="PANTHER" id="PTHR33867:SF1">
    <property type="entry name" value="RIBOSOME MATURATION FACTOR RIMP"/>
    <property type="match status" value="1"/>
</dbReference>
<dbReference type="Pfam" id="PF17384">
    <property type="entry name" value="DUF150_C"/>
    <property type="match status" value="1"/>
</dbReference>
<dbReference type="Pfam" id="PF02576">
    <property type="entry name" value="RimP_N"/>
    <property type="match status" value="1"/>
</dbReference>
<dbReference type="SUPFAM" id="SSF74942">
    <property type="entry name" value="YhbC-like, C-terminal domain"/>
    <property type="match status" value="1"/>
</dbReference>
<dbReference type="SUPFAM" id="SSF75420">
    <property type="entry name" value="YhbC-like, N-terminal domain"/>
    <property type="match status" value="1"/>
</dbReference>
<feature type="chain" id="PRO_0000181917" description="Ribosome maturation factor RimP">
    <location>
        <begin position="1"/>
        <end position="151"/>
    </location>
</feature>
<comment type="function">
    <text evidence="1">Required for maturation of 30S ribosomal subunits.</text>
</comment>
<comment type="subcellular location">
    <subcellularLocation>
        <location evidence="1">Cytoplasm</location>
    </subcellularLocation>
</comment>
<comment type="similarity">
    <text evidence="1">Belongs to the RimP family.</text>
</comment>
<keyword id="KW-0963">Cytoplasm</keyword>
<keyword id="KW-1185">Reference proteome</keyword>
<keyword id="KW-0690">Ribosome biogenesis</keyword>
<sequence>MATLESRLADMLKVPVEALGFQLWGIEYVQAGKHSILRVFIDGENGINIEDCANVSRQVSAVLDVEDPISTEYTLEVSSPGVDRPLFTAEQYAAYVGEDVKLQLTMPVAGSRNLKGAITQVDGQMLSVNVNGKELVVALDNIRKGNIIAKF</sequence>
<reference key="1">
    <citation type="journal article" date="2002" name="Nat. Biotechnol.">
        <title>Genome sequence of the dissimilatory metal ion-reducing bacterium Shewanella oneidensis.</title>
        <authorList>
            <person name="Heidelberg J.F."/>
            <person name="Paulsen I.T."/>
            <person name="Nelson K.E."/>
            <person name="Gaidos E.J."/>
            <person name="Nelson W.C."/>
            <person name="Read T.D."/>
            <person name="Eisen J.A."/>
            <person name="Seshadri R."/>
            <person name="Ward N.L."/>
            <person name="Methe B.A."/>
            <person name="Clayton R.A."/>
            <person name="Meyer T."/>
            <person name="Tsapin A."/>
            <person name="Scott J."/>
            <person name="Beanan M.J."/>
            <person name="Brinkac L.M."/>
            <person name="Daugherty S.C."/>
            <person name="DeBoy R.T."/>
            <person name="Dodson R.J."/>
            <person name="Durkin A.S."/>
            <person name="Haft D.H."/>
            <person name="Kolonay J.F."/>
            <person name="Madupu R."/>
            <person name="Peterson J.D."/>
            <person name="Umayam L.A."/>
            <person name="White O."/>
            <person name="Wolf A.M."/>
            <person name="Vamathevan J.J."/>
            <person name="Weidman J.F."/>
            <person name="Impraim M."/>
            <person name="Lee K."/>
            <person name="Berry K.J."/>
            <person name="Lee C."/>
            <person name="Mueller J."/>
            <person name="Khouri H.M."/>
            <person name="Gill J."/>
            <person name="Utterback T.R."/>
            <person name="McDonald L.A."/>
            <person name="Feldblyum T.V."/>
            <person name="Smith H.O."/>
            <person name="Venter J.C."/>
            <person name="Nealson K.H."/>
            <person name="Fraser C.M."/>
        </authorList>
    </citation>
    <scope>NUCLEOTIDE SEQUENCE [LARGE SCALE GENOMIC DNA]</scope>
    <source>
        <strain>ATCC 700550 / JCM 31522 / CIP 106686 / LMG 19005 / NCIMB 14063 / MR-1</strain>
    </source>
</reference>
<name>RIMP_SHEON</name>